<name>PLCD_HUMAN</name>
<feature type="chain" id="PRO_0000208197" description="1-acyl-sn-glycerol-3-phosphate acyltransferase delta">
    <location>
        <begin position="1"/>
        <end position="378"/>
    </location>
</feature>
<feature type="transmembrane region" description="Helical" evidence="3">
    <location>
        <begin position="11"/>
        <end position="31"/>
    </location>
</feature>
<feature type="transmembrane region" description="Helical" evidence="3">
    <location>
        <begin position="125"/>
        <end position="145"/>
    </location>
</feature>
<feature type="transmembrane region" description="Helical" evidence="3">
    <location>
        <begin position="307"/>
        <end position="327"/>
    </location>
</feature>
<feature type="transmembrane region" description="Helical" evidence="3">
    <location>
        <begin position="338"/>
        <end position="358"/>
    </location>
</feature>
<feature type="short sequence motif" description="HXXXXD motif" evidence="2">
    <location>
        <begin position="96"/>
        <end position="101"/>
    </location>
</feature>
<feature type="splice variant" id="VSP_056928" description="In isoform 2." evidence="5">
    <original>Q</original>
    <variation>L</variation>
    <location>
        <position position="60"/>
    </location>
</feature>
<feature type="splice variant" id="VSP_056929" description="In isoform 2." evidence="5">
    <location>
        <begin position="61"/>
        <end position="222"/>
    </location>
</feature>
<gene>
    <name type="primary">AGPAT4</name>
    <name type="ORF">UNQ499/PRO1016</name>
</gene>
<keyword id="KW-0012">Acyltransferase</keyword>
<keyword id="KW-0025">Alternative splicing</keyword>
<keyword id="KW-0256">Endoplasmic reticulum</keyword>
<keyword id="KW-0444">Lipid biosynthesis</keyword>
<keyword id="KW-0443">Lipid metabolism</keyword>
<keyword id="KW-0472">Membrane</keyword>
<keyword id="KW-0594">Phospholipid biosynthesis</keyword>
<keyword id="KW-1208">Phospholipid metabolism</keyword>
<keyword id="KW-1267">Proteomics identification</keyword>
<keyword id="KW-1185">Reference proteome</keyword>
<keyword id="KW-0808">Transferase</keyword>
<keyword id="KW-0812">Transmembrane</keyword>
<keyword id="KW-1133">Transmembrane helix</keyword>
<dbReference type="EC" id="2.3.1.51" evidence="1"/>
<dbReference type="EMBL" id="AF156776">
    <property type="protein sequence ID" value="AAF80338.1"/>
    <property type="molecule type" value="mRNA"/>
</dbReference>
<dbReference type="EMBL" id="AY358506">
    <property type="protein sequence ID" value="AAQ88870.1"/>
    <property type="molecule type" value="mRNA"/>
</dbReference>
<dbReference type="EMBL" id="AK299721">
    <property type="protein sequence ID" value="BAG61621.1"/>
    <property type="molecule type" value="mRNA"/>
</dbReference>
<dbReference type="EMBL" id="AL109942">
    <property type="status" value="NOT_ANNOTATED_CDS"/>
    <property type="molecule type" value="Genomic_DNA"/>
</dbReference>
<dbReference type="EMBL" id="BC020209">
    <property type="protein sequence ID" value="AAH20209.1"/>
    <property type="molecule type" value="mRNA"/>
</dbReference>
<dbReference type="CCDS" id="CCDS5280.1">
    <molecule id="Q9NRZ5-1"/>
</dbReference>
<dbReference type="RefSeq" id="NP_064518.1">
    <molecule id="Q9NRZ5-1"/>
    <property type="nucleotide sequence ID" value="NM_020133.3"/>
</dbReference>
<dbReference type="BioGRID" id="121225">
    <property type="interactions" value="88"/>
</dbReference>
<dbReference type="FunCoup" id="Q9NRZ5">
    <property type="interactions" value="1243"/>
</dbReference>
<dbReference type="IntAct" id="Q9NRZ5">
    <property type="interactions" value="59"/>
</dbReference>
<dbReference type="STRING" id="9606.ENSP00000314036"/>
<dbReference type="iPTMnet" id="Q9NRZ5"/>
<dbReference type="PhosphoSitePlus" id="Q9NRZ5"/>
<dbReference type="SwissPalm" id="Q9NRZ5"/>
<dbReference type="BioMuta" id="AGPAT4"/>
<dbReference type="DMDM" id="12230468"/>
<dbReference type="jPOST" id="Q9NRZ5"/>
<dbReference type="MassIVE" id="Q9NRZ5"/>
<dbReference type="PaxDb" id="9606-ENSP00000314036"/>
<dbReference type="PeptideAtlas" id="Q9NRZ5"/>
<dbReference type="ProteomicsDB" id="5022"/>
<dbReference type="ProteomicsDB" id="82446">
    <molecule id="Q9NRZ5-1"/>
</dbReference>
<dbReference type="Pumba" id="Q9NRZ5"/>
<dbReference type="Antibodypedia" id="33497">
    <property type="antibodies" value="194 antibodies from 28 providers"/>
</dbReference>
<dbReference type="DNASU" id="56895"/>
<dbReference type="Ensembl" id="ENST00000320285.9">
    <molecule id="Q9NRZ5-1"/>
    <property type="protein sequence ID" value="ENSP00000314036.4"/>
    <property type="gene ID" value="ENSG00000026652.15"/>
</dbReference>
<dbReference type="GeneID" id="56895"/>
<dbReference type="KEGG" id="hsa:56895"/>
<dbReference type="MANE-Select" id="ENST00000320285.9">
    <property type="protein sequence ID" value="ENSP00000314036.4"/>
    <property type="RefSeq nucleotide sequence ID" value="NM_020133.3"/>
    <property type="RefSeq protein sequence ID" value="NP_064518.1"/>
</dbReference>
<dbReference type="UCSC" id="uc003qtr.2">
    <molecule id="Q9NRZ5-1"/>
    <property type="organism name" value="human"/>
</dbReference>
<dbReference type="AGR" id="HGNC:20885"/>
<dbReference type="CTD" id="56895"/>
<dbReference type="DisGeNET" id="56895"/>
<dbReference type="GeneCards" id="AGPAT4"/>
<dbReference type="HGNC" id="HGNC:20885">
    <property type="gene designation" value="AGPAT4"/>
</dbReference>
<dbReference type="HPA" id="ENSG00000026652">
    <property type="expression patterns" value="Tissue enriched (brain)"/>
</dbReference>
<dbReference type="MIM" id="614795">
    <property type="type" value="gene"/>
</dbReference>
<dbReference type="neXtProt" id="NX_Q9NRZ5"/>
<dbReference type="OpenTargets" id="ENSG00000026652"/>
<dbReference type="PharmGKB" id="PA134961047"/>
<dbReference type="VEuPathDB" id="HostDB:ENSG00000026652"/>
<dbReference type="eggNOG" id="KOG1505">
    <property type="taxonomic scope" value="Eukaryota"/>
</dbReference>
<dbReference type="GeneTree" id="ENSGT00950000182836"/>
<dbReference type="HOGENOM" id="CLU_041844_5_2_1"/>
<dbReference type="InParanoid" id="Q9NRZ5"/>
<dbReference type="OMA" id="EQECSTW"/>
<dbReference type="OrthoDB" id="189226at2759"/>
<dbReference type="PAN-GO" id="Q9NRZ5">
    <property type="GO annotations" value="3 GO annotations based on evolutionary models"/>
</dbReference>
<dbReference type="PhylomeDB" id="Q9NRZ5"/>
<dbReference type="TreeFam" id="TF314065"/>
<dbReference type="BioCyc" id="MetaCyc:HS00452-MONOMER"/>
<dbReference type="BRENDA" id="2.3.1.51">
    <property type="organism ID" value="2681"/>
</dbReference>
<dbReference type="PathwayCommons" id="Q9NRZ5"/>
<dbReference type="Reactome" id="R-HSA-1483166">
    <property type="pathway name" value="Synthesis of PA"/>
</dbReference>
<dbReference type="SignaLink" id="Q9NRZ5"/>
<dbReference type="SIGNOR" id="Q9NRZ5"/>
<dbReference type="UniPathway" id="UPA00557">
    <property type="reaction ID" value="UER00613"/>
</dbReference>
<dbReference type="BioGRID-ORCS" id="56895">
    <property type="hits" value="6 hits in 1150 CRISPR screens"/>
</dbReference>
<dbReference type="ChiTaRS" id="AGPAT4">
    <property type="organism name" value="human"/>
</dbReference>
<dbReference type="GenomeRNAi" id="56895"/>
<dbReference type="Pharos" id="Q9NRZ5">
    <property type="development level" value="Tbio"/>
</dbReference>
<dbReference type="PRO" id="PR:Q9NRZ5"/>
<dbReference type="Proteomes" id="UP000005640">
    <property type="component" value="Chromosome 6"/>
</dbReference>
<dbReference type="RNAct" id="Q9NRZ5">
    <property type="molecule type" value="protein"/>
</dbReference>
<dbReference type="Bgee" id="ENSG00000026652">
    <property type="expression patterns" value="Expressed in tendon of biceps brachii and 152 other cell types or tissues"/>
</dbReference>
<dbReference type="ExpressionAtlas" id="Q9NRZ5">
    <property type="expression patterns" value="baseline and differential"/>
</dbReference>
<dbReference type="GO" id="GO:0012505">
    <property type="term" value="C:endomembrane system"/>
    <property type="evidence" value="ECO:0000318"/>
    <property type="project" value="GO_Central"/>
</dbReference>
<dbReference type="GO" id="GO:0005783">
    <property type="term" value="C:endoplasmic reticulum"/>
    <property type="evidence" value="ECO:0000250"/>
    <property type="project" value="UniProtKB"/>
</dbReference>
<dbReference type="GO" id="GO:0005789">
    <property type="term" value="C:endoplasmic reticulum membrane"/>
    <property type="evidence" value="ECO:0000304"/>
    <property type="project" value="Reactome"/>
</dbReference>
<dbReference type="GO" id="GO:0005741">
    <property type="term" value="C:mitochondrial outer membrane"/>
    <property type="evidence" value="ECO:0000318"/>
    <property type="project" value="GO_Central"/>
</dbReference>
<dbReference type="GO" id="GO:0003841">
    <property type="term" value="F:1-acylglycerol-3-phosphate O-acyltransferase activity"/>
    <property type="evidence" value="ECO:0000250"/>
    <property type="project" value="UniProtKB"/>
</dbReference>
<dbReference type="GO" id="GO:0016024">
    <property type="term" value="P:CDP-diacylglycerol biosynthetic process"/>
    <property type="evidence" value="ECO:0007669"/>
    <property type="project" value="UniProtKB-UniPathway"/>
</dbReference>
<dbReference type="GO" id="GO:0006654">
    <property type="term" value="P:phosphatidic acid biosynthetic process"/>
    <property type="evidence" value="ECO:0000304"/>
    <property type="project" value="Reactome"/>
</dbReference>
<dbReference type="GO" id="GO:0008654">
    <property type="term" value="P:phospholipid biosynthetic process"/>
    <property type="evidence" value="ECO:0000303"/>
    <property type="project" value="UniProtKB"/>
</dbReference>
<dbReference type="CDD" id="cd07990">
    <property type="entry name" value="LPLAT_LCLAT1-like"/>
    <property type="match status" value="1"/>
</dbReference>
<dbReference type="InterPro" id="IPR032098">
    <property type="entry name" value="Acyltransf_C"/>
</dbReference>
<dbReference type="InterPro" id="IPR002123">
    <property type="entry name" value="Plipid/glycerol_acylTrfase"/>
</dbReference>
<dbReference type="PANTHER" id="PTHR10983:SF8">
    <property type="entry name" value="1-ACYL-SN-GLYCEROL-3-PHOSPHATE ACYLTRANSFERASE DELTA"/>
    <property type="match status" value="1"/>
</dbReference>
<dbReference type="PANTHER" id="PTHR10983">
    <property type="entry name" value="1-ACYLGLYCEROL-3-PHOSPHATE ACYLTRANSFERASE-RELATED"/>
    <property type="match status" value="1"/>
</dbReference>
<dbReference type="Pfam" id="PF16076">
    <property type="entry name" value="Acyltransf_C"/>
    <property type="match status" value="1"/>
</dbReference>
<dbReference type="Pfam" id="PF01553">
    <property type="entry name" value="Acyltransferase"/>
    <property type="match status" value="1"/>
</dbReference>
<dbReference type="SMART" id="SM00563">
    <property type="entry name" value="PlsC"/>
    <property type="match status" value="1"/>
</dbReference>
<dbReference type="SUPFAM" id="SSF69593">
    <property type="entry name" value="Glycerol-3-phosphate (1)-acyltransferase"/>
    <property type="match status" value="1"/>
</dbReference>
<sequence length="378" mass="44021">MDLAGLLKSQFLCHLVFCYVFIASGLIINTIQLFTLLLWPINKQLFRKINCRLSYCISSQLVMLLEWWSGTECTIFTDPRAYLKYGKENAIVVLNHKFEIDFLCGWSLSERFGLLGGSKVLAKKELAYVPIIGWMWYFTEMVFCSRKWEQDRKTVATSLQHLRDYPEKYFFLIHCEGTRFTEKKHEISMQVARAKGLPRLKHHLLPRTKGFAITVRSLRNVVSAVYDCTLNFRNNENPTLLGVLNGKKYHADLYVRRIPLEDIPEDDDECSAWLHKLYQEKDAFQEEYYRTGTFPETPMVPPRRPWTLVNWLFWASLVLYPFFQFLVSMIRSGSSLTLASFILVFFVASVGVRWMIGVTEIDKGSAYGNSDSKQKLND</sequence>
<protein>
    <recommendedName>
        <fullName>1-acyl-sn-glycerol-3-phosphate acyltransferase delta</fullName>
        <ecNumber evidence="1">2.3.1.51</ecNumber>
    </recommendedName>
    <alternativeName>
        <fullName>1-acylglycerol-3-phosphate O-acyltransferase 4</fullName>
        <shortName>1-AGP acyltransferase 4</shortName>
        <shortName>1-AGPAT 4</shortName>
    </alternativeName>
    <alternativeName>
        <fullName>Lysophosphatidic acid acyltransferase delta</fullName>
        <shortName>LPAAT-delta</shortName>
    </alternativeName>
</protein>
<organism>
    <name type="scientific">Homo sapiens</name>
    <name type="common">Human</name>
    <dbReference type="NCBI Taxonomy" id="9606"/>
    <lineage>
        <taxon>Eukaryota</taxon>
        <taxon>Metazoa</taxon>
        <taxon>Chordata</taxon>
        <taxon>Craniata</taxon>
        <taxon>Vertebrata</taxon>
        <taxon>Euteleostomi</taxon>
        <taxon>Mammalia</taxon>
        <taxon>Eutheria</taxon>
        <taxon>Euarchontoglires</taxon>
        <taxon>Primates</taxon>
        <taxon>Haplorrhini</taxon>
        <taxon>Catarrhini</taxon>
        <taxon>Hominidae</taxon>
        <taxon>Homo</taxon>
    </lineage>
</organism>
<accession>Q9NRZ5</accession>
<accession>B4DSF9</accession>
<accession>Q5TEF0</accession>
<evidence type="ECO:0000250" key="1">
    <source>
        <dbReference type="UniProtKB" id="Q8K4X7"/>
    </source>
</evidence>
<evidence type="ECO:0000250" key="2">
    <source>
        <dbReference type="UniProtKB" id="Q9D517"/>
    </source>
</evidence>
<evidence type="ECO:0000255" key="3"/>
<evidence type="ECO:0000269" key="4">
    <source>
    </source>
</evidence>
<evidence type="ECO:0000303" key="5">
    <source>
    </source>
</evidence>
<evidence type="ECO:0000305" key="6"/>
<proteinExistence type="evidence at protein level"/>
<reference key="1">
    <citation type="journal article" date="2001" name="Front. Biosci.">
        <title>The structure and functions of human lysophosphatidic acid acyltransferases.</title>
        <authorList>
            <person name="Leung D.W."/>
        </authorList>
    </citation>
    <scope>NUCLEOTIDE SEQUENCE [MRNA] (ISOFORM 1)</scope>
</reference>
<reference key="2">
    <citation type="journal article" date="2003" name="Genome Res.">
        <title>The secreted protein discovery initiative (SPDI), a large-scale effort to identify novel human secreted and transmembrane proteins: a bioinformatics assessment.</title>
        <authorList>
            <person name="Clark H.F."/>
            <person name="Gurney A.L."/>
            <person name="Abaya E."/>
            <person name="Baker K."/>
            <person name="Baldwin D.T."/>
            <person name="Brush J."/>
            <person name="Chen J."/>
            <person name="Chow B."/>
            <person name="Chui C."/>
            <person name="Crowley C."/>
            <person name="Currell B."/>
            <person name="Deuel B."/>
            <person name="Dowd P."/>
            <person name="Eaton D."/>
            <person name="Foster J.S."/>
            <person name="Grimaldi C."/>
            <person name="Gu Q."/>
            <person name="Hass P.E."/>
            <person name="Heldens S."/>
            <person name="Huang A."/>
            <person name="Kim H.S."/>
            <person name="Klimowski L."/>
            <person name="Jin Y."/>
            <person name="Johnson S."/>
            <person name="Lee J."/>
            <person name="Lewis L."/>
            <person name="Liao D."/>
            <person name="Mark M.R."/>
            <person name="Robbie E."/>
            <person name="Sanchez C."/>
            <person name="Schoenfeld J."/>
            <person name="Seshagiri S."/>
            <person name="Simmons L."/>
            <person name="Singh J."/>
            <person name="Smith V."/>
            <person name="Stinson J."/>
            <person name="Vagts A."/>
            <person name="Vandlen R.L."/>
            <person name="Watanabe C."/>
            <person name="Wieand D."/>
            <person name="Woods K."/>
            <person name="Xie M.-H."/>
            <person name="Yansura D.G."/>
            <person name="Yi S."/>
            <person name="Yu G."/>
            <person name="Yuan J."/>
            <person name="Zhang M."/>
            <person name="Zhang Z."/>
            <person name="Goddard A.D."/>
            <person name="Wood W.I."/>
            <person name="Godowski P.J."/>
            <person name="Gray A.M."/>
        </authorList>
    </citation>
    <scope>NUCLEOTIDE SEQUENCE [LARGE SCALE MRNA] (ISOFORM 1)</scope>
</reference>
<reference key="3">
    <citation type="journal article" date="2004" name="Nat. Genet.">
        <title>Complete sequencing and characterization of 21,243 full-length human cDNAs.</title>
        <authorList>
            <person name="Ota T."/>
            <person name="Suzuki Y."/>
            <person name="Nishikawa T."/>
            <person name="Otsuki T."/>
            <person name="Sugiyama T."/>
            <person name="Irie R."/>
            <person name="Wakamatsu A."/>
            <person name="Hayashi K."/>
            <person name="Sato H."/>
            <person name="Nagai K."/>
            <person name="Kimura K."/>
            <person name="Makita H."/>
            <person name="Sekine M."/>
            <person name="Obayashi M."/>
            <person name="Nishi T."/>
            <person name="Shibahara T."/>
            <person name="Tanaka T."/>
            <person name="Ishii S."/>
            <person name="Yamamoto J."/>
            <person name="Saito K."/>
            <person name="Kawai Y."/>
            <person name="Isono Y."/>
            <person name="Nakamura Y."/>
            <person name="Nagahari K."/>
            <person name="Murakami K."/>
            <person name="Yasuda T."/>
            <person name="Iwayanagi T."/>
            <person name="Wagatsuma M."/>
            <person name="Shiratori A."/>
            <person name="Sudo H."/>
            <person name="Hosoiri T."/>
            <person name="Kaku Y."/>
            <person name="Kodaira H."/>
            <person name="Kondo H."/>
            <person name="Sugawara M."/>
            <person name="Takahashi M."/>
            <person name="Kanda K."/>
            <person name="Yokoi T."/>
            <person name="Furuya T."/>
            <person name="Kikkawa E."/>
            <person name="Omura Y."/>
            <person name="Abe K."/>
            <person name="Kamihara K."/>
            <person name="Katsuta N."/>
            <person name="Sato K."/>
            <person name="Tanikawa M."/>
            <person name="Yamazaki M."/>
            <person name="Ninomiya K."/>
            <person name="Ishibashi T."/>
            <person name="Yamashita H."/>
            <person name="Murakawa K."/>
            <person name="Fujimori K."/>
            <person name="Tanai H."/>
            <person name="Kimata M."/>
            <person name="Watanabe M."/>
            <person name="Hiraoka S."/>
            <person name="Chiba Y."/>
            <person name="Ishida S."/>
            <person name="Ono Y."/>
            <person name="Takiguchi S."/>
            <person name="Watanabe S."/>
            <person name="Yosida M."/>
            <person name="Hotuta T."/>
            <person name="Kusano J."/>
            <person name="Kanehori K."/>
            <person name="Takahashi-Fujii A."/>
            <person name="Hara H."/>
            <person name="Tanase T.-O."/>
            <person name="Nomura Y."/>
            <person name="Togiya S."/>
            <person name="Komai F."/>
            <person name="Hara R."/>
            <person name="Takeuchi K."/>
            <person name="Arita M."/>
            <person name="Imose N."/>
            <person name="Musashino K."/>
            <person name="Yuuki H."/>
            <person name="Oshima A."/>
            <person name="Sasaki N."/>
            <person name="Aotsuka S."/>
            <person name="Yoshikawa Y."/>
            <person name="Matsunawa H."/>
            <person name="Ichihara T."/>
            <person name="Shiohata N."/>
            <person name="Sano S."/>
            <person name="Moriya S."/>
            <person name="Momiyama H."/>
            <person name="Satoh N."/>
            <person name="Takami S."/>
            <person name="Terashima Y."/>
            <person name="Suzuki O."/>
            <person name="Nakagawa S."/>
            <person name="Senoh A."/>
            <person name="Mizoguchi H."/>
            <person name="Goto Y."/>
            <person name="Shimizu F."/>
            <person name="Wakebe H."/>
            <person name="Hishigaki H."/>
            <person name="Watanabe T."/>
            <person name="Sugiyama A."/>
            <person name="Takemoto M."/>
            <person name="Kawakami B."/>
            <person name="Yamazaki M."/>
            <person name="Watanabe K."/>
            <person name="Kumagai A."/>
            <person name="Itakura S."/>
            <person name="Fukuzumi Y."/>
            <person name="Fujimori Y."/>
            <person name="Komiyama M."/>
            <person name="Tashiro H."/>
            <person name="Tanigami A."/>
            <person name="Fujiwara T."/>
            <person name="Ono T."/>
            <person name="Yamada K."/>
            <person name="Fujii Y."/>
            <person name="Ozaki K."/>
            <person name="Hirao M."/>
            <person name="Ohmori Y."/>
            <person name="Kawabata A."/>
            <person name="Hikiji T."/>
            <person name="Kobatake N."/>
            <person name="Inagaki H."/>
            <person name="Ikema Y."/>
            <person name="Okamoto S."/>
            <person name="Okitani R."/>
            <person name="Kawakami T."/>
            <person name="Noguchi S."/>
            <person name="Itoh T."/>
            <person name="Shigeta K."/>
            <person name="Senba T."/>
            <person name="Matsumura K."/>
            <person name="Nakajima Y."/>
            <person name="Mizuno T."/>
            <person name="Morinaga M."/>
            <person name="Sasaki M."/>
            <person name="Togashi T."/>
            <person name="Oyama M."/>
            <person name="Hata H."/>
            <person name="Watanabe M."/>
            <person name="Komatsu T."/>
            <person name="Mizushima-Sugano J."/>
            <person name="Satoh T."/>
            <person name="Shirai Y."/>
            <person name="Takahashi Y."/>
            <person name="Nakagawa K."/>
            <person name="Okumura K."/>
            <person name="Nagase T."/>
            <person name="Nomura N."/>
            <person name="Kikuchi H."/>
            <person name="Masuho Y."/>
            <person name="Yamashita R."/>
            <person name="Nakai K."/>
            <person name="Yada T."/>
            <person name="Nakamura Y."/>
            <person name="Ohara O."/>
            <person name="Isogai T."/>
            <person name="Sugano S."/>
        </authorList>
    </citation>
    <scope>NUCLEOTIDE SEQUENCE [LARGE SCALE MRNA] (ISOFORM 2)</scope>
    <source>
        <tissue>Brain</tissue>
    </source>
</reference>
<reference key="4">
    <citation type="journal article" date="2003" name="Nature">
        <title>The DNA sequence and analysis of human chromosome 6.</title>
        <authorList>
            <person name="Mungall A.J."/>
            <person name="Palmer S.A."/>
            <person name="Sims S.K."/>
            <person name="Edwards C.A."/>
            <person name="Ashurst J.L."/>
            <person name="Wilming L."/>
            <person name="Jones M.C."/>
            <person name="Horton R."/>
            <person name="Hunt S.E."/>
            <person name="Scott C.E."/>
            <person name="Gilbert J.G.R."/>
            <person name="Clamp M.E."/>
            <person name="Bethel G."/>
            <person name="Milne S."/>
            <person name="Ainscough R."/>
            <person name="Almeida J.P."/>
            <person name="Ambrose K.D."/>
            <person name="Andrews T.D."/>
            <person name="Ashwell R.I.S."/>
            <person name="Babbage A.K."/>
            <person name="Bagguley C.L."/>
            <person name="Bailey J."/>
            <person name="Banerjee R."/>
            <person name="Barker D.J."/>
            <person name="Barlow K.F."/>
            <person name="Bates K."/>
            <person name="Beare D.M."/>
            <person name="Beasley H."/>
            <person name="Beasley O."/>
            <person name="Bird C.P."/>
            <person name="Blakey S.E."/>
            <person name="Bray-Allen S."/>
            <person name="Brook J."/>
            <person name="Brown A.J."/>
            <person name="Brown J.Y."/>
            <person name="Burford D.C."/>
            <person name="Burrill W."/>
            <person name="Burton J."/>
            <person name="Carder C."/>
            <person name="Carter N.P."/>
            <person name="Chapman J.C."/>
            <person name="Clark S.Y."/>
            <person name="Clark G."/>
            <person name="Clee C.M."/>
            <person name="Clegg S."/>
            <person name="Cobley V."/>
            <person name="Collier R.E."/>
            <person name="Collins J.E."/>
            <person name="Colman L.K."/>
            <person name="Corby N.R."/>
            <person name="Coville G.J."/>
            <person name="Culley K.M."/>
            <person name="Dhami P."/>
            <person name="Davies J."/>
            <person name="Dunn M."/>
            <person name="Earthrowl M.E."/>
            <person name="Ellington A.E."/>
            <person name="Evans K.A."/>
            <person name="Faulkner L."/>
            <person name="Francis M.D."/>
            <person name="Frankish A."/>
            <person name="Frankland J."/>
            <person name="French L."/>
            <person name="Garner P."/>
            <person name="Garnett J."/>
            <person name="Ghori M.J."/>
            <person name="Gilby L.M."/>
            <person name="Gillson C.J."/>
            <person name="Glithero R.J."/>
            <person name="Grafham D.V."/>
            <person name="Grant M."/>
            <person name="Gribble S."/>
            <person name="Griffiths C."/>
            <person name="Griffiths M.N.D."/>
            <person name="Hall R."/>
            <person name="Halls K.S."/>
            <person name="Hammond S."/>
            <person name="Harley J.L."/>
            <person name="Hart E.A."/>
            <person name="Heath P.D."/>
            <person name="Heathcott R."/>
            <person name="Holmes S.J."/>
            <person name="Howden P.J."/>
            <person name="Howe K.L."/>
            <person name="Howell G.R."/>
            <person name="Huckle E."/>
            <person name="Humphray S.J."/>
            <person name="Humphries M.D."/>
            <person name="Hunt A.R."/>
            <person name="Johnson C.M."/>
            <person name="Joy A.A."/>
            <person name="Kay M."/>
            <person name="Keenan S.J."/>
            <person name="Kimberley A.M."/>
            <person name="King A."/>
            <person name="Laird G.K."/>
            <person name="Langford C."/>
            <person name="Lawlor S."/>
            <person name="Leongamornlert D.A."/>
            <person name="Leversha M."/>
            <person name="Lloyd C.R."/>
            <person name="Lloyd D.M."/>
            <person name="Loveland J.E."/>
            <person name="Lovell J."/>
            <person name="Martin S."/>
            <person name="Mashreghi-Mohammadi M."/>
            <person name="Maslen G.L."/>
            <person name="Matthews L."/>
            <person name="McCann O.T."/>
            <person name="McLaren S.J."/>
            <person name="McLay K."/>
            <person name="McMurray A."/>
            <person name="Moore M.J.F."/>
            <person name="Mullikin J.C."/>
            <person name="Niblett D."/>
            <person name="Nickerson T."/>
            <person name="Novik K.L."/>
            <person name="Oliver K."/>
            <person name="Overton-Larty E.K."/>
            <person name="Parker A."/>
            <person name="Patel R."/>
            <person name="Pearce A.V."/>
            <person name="Peck A.I."/>
            <person name="Phillimore B.J.C.T."/>
            <person name="Phillips S."/>
            <person name="Plumb R.W."/>
            <person name="Porter K.M."/>
            <person name="Ramsey Y."/>
            <person name="Ranby S.A."/>
            <person name="Rice C.M."/>
            <person name="Ross M.T."/>
            <person name="Searle S.M."/>
            <person name="Sehra H.K."/>
            <person name="Sheridan E."/>
            <person name="Skuce C.D."/>
            <person name="Smith S."/>
            <person name="Smith M."/>
            <person name="Spraggon L."/>
            <person name="Squares S.L."/>
            <person name="Steward C.A."/>
            <person name="Sycamore N."/>
            <person name="Tamlyn-Hall G."/>
            <person name="Tester J."/>
            <person name="Theaker A.J."/>
            <person name="Thomas D.W."/>
            <person name="Thorpe A."/>
            <person name="Tracey A."/>
            <person name="Tromans A."/>
            <person name="Tubby B."/>
            <person name="Wall M."/>
            <person name="Wallis J.M."/>
            <person name="West A.P."/>
            <person name="White S.S."/>
            <person name="Whitehead S.L."/>
            <person name="Whittaker H."/>
            <person name="Wild A."/>
            <person name="Willey D.J."/>
            <person name="Wilmer T.E."/>
            <person name="Wood J.M."/>
            <person name="Wray P.W."/>
            <person name="Wyatt J.C."/>
            <person name="Young L."/>
            <person name="Younger R.M."/>
            <person name="Bentley D.R."/>
            <person name="Coulson A."/>
            <person name="Durbin R.M."/>
            <person name="Hubbard T."/>
            <person name="Sulston J.E."/>
            <person name="Dunham I."/>
            <person name="Rogers J."/>
            <person name="Beck S."/>
        </authorList>
    </citation>
    <scope>NUCLEOTIDE SEQUENCE [LARGE SCALE GENOMIC DNA]</scope>
</reference>
<reference key="5">
    <citation type="journal article" date="2004" name="Genome Res.">
        <title>The status, quality, and expansion of the NIH full-length cDNA project: the Mammalian Gene Collection (MGC).</title>
        <authorList>
            <consortium name="The MGC Project Team"/>
        </authorList>
    </citation>
    <scope>NUCLEOTIDE SEQUENCE [LARGE SCALE MRNA] (ISOFORM 1)</scope>
    <source>
        <tissue>Spleen</tissue>
    </source>
</reference>
<reference key="6">
    <citation type="journal article" date="2011" name="J. Lipid Res.">
        <title>Enzymatic activities of the human AGPAT isoform 3 and isoform 5: localization of AGPAT5 to mitochondria.</title>
        <authorList>
            <person name="Prasad S.S."/>
            <person name="Garg A."/>
            <person name="Agarwal A.K."/>
        </authorList>
    </citation>
    <scope>TISSUE SPECIFICITY</scope>
</reference>
<comment type="function">
    <text evidence="1">Converts 1-acyl-sn-glycerol-3-phosphate (lysophosphatidic acid or LPA) into 1,2-diacyl-sn-glycerol-3-phosphate (phosphatidic acid or PA) by incorporating an acyl moiety at the sn-2 position of the glycerol backbone (By similarity). Exhibits high acyl-CoA specificity for polyunsaturated fatty acyl-CoA, especially docosahexaenoyl-CoA (22:6-CoA, DHA-CoA) (By similarity).</text>
</comment>
<comment type="catalytic activity">
    <reaction evidence="1">
        <text>a 1-acyl-sn-glycero-3-phosphate + an acyl-CoA = a 1,2-diacyl-sn-glycero-3-phosphate + CoA</text>
        <dbReference type="Rhea" id="RHEA:19709"/>
        <dbReference type="ChEBI" id="CHEBI:57287"/>
        <dbReference type="ChEBI" id="CHEBI:57970"/>
        <dbReference type="ChEBI" id="CHEBI:58342"/>
        <dbReference type="ChEBI" id="CHEBI:58608"/>
        <dbReference type="EC" id="2.3.1.51"/>
    </reaction>
    <physiologicalReaction direction="left-to-right" evidence="1">
        <dbReference type="Rhea" id="RHEA:19710"/>
    </physiologicalReaction>
</comment>
<comment type="catalytic activity">
    <reaction evidence="1">
        <text>(4Z,7Z,10Z,13Z,16Z,19Z)-docosahexaenoyl-CoA + 1-hexadecanoyl-sn-glycero-3-phosphate = 1-hexadecanoyl-2-(4Z,7Z,10Z,13Z,16Z,19Z-docosahexaenoyl)-sn-glycero-3-phosphate + CoA</text>
        <dbReference type="Rhea" id="RHEA:55300"/>
        <dbReference type="ChEBI" id="CHEBI:57287"/>
        <dbReference type="ChEBI" id="CHEBI:57518"/>
        <dbReference type="ChEBI" id="CHEBI:74298"/>
        <dbReference type="ChEBI" id="CHEBI:82928"/>
    </reaction>
    <physiologicalReaction direction="left-to-right" evidence="1">
        <dbReference type="Rhea" id="RHEA:55301"/>
    </physiologicalReaction>
</comment>
<comment type="catalytic activity">
    <reaction evidence="1">
        <text>1-octadecanoyl-sn-glycero-3-phosphate + (9Z,12Z)-octadecadienoyl-CoA = 1-octadecanoyl-2-(9Z,12Z-octadecadienoyl)-sn-glycero-3-phosphate + CoA</text>
        <dbReference type="Rhea" id="RHEA:55304"/>
        <dbReference type="ChEBI" id="CHEBI:57287"/>
        <dbReference type="ChEBI" id="CHEBI:57383"/>
        <dbReference type="ChEBI" id="CHEBI:74565"/>
        <dbReference type="ChEBI" id="CHEBI:77098"/>
    </reaction>
    <physiologicalReaction direction="left-to-right" evidence="1">
        <dbReference type="Rhea" id="RHEA:55305"/>
    </physiologicalReaction>
</comment>
<comment type="catalytic activity">
    <reaction evidence="1">
        <text>1-octadecanoyl-sn-glycero-3-phosphate + (4Z,7Z,10Z,13Z,16Z,19Z)-docosahexaenoyl-CoA = 1-octadecanoyl-2-(4Z,7Z,10Z,13Z,16Z,19Z-docosahexaenoyl)-sn-glycero-3-phosphate + CoA</text>
        <dbReference type="Rhea" id="RHEA:55308"/>
        <dbReference type="ChEBI" id="CHEBI:57287"/>
        <dbReference type="ChEBI" id="CHEBI:74298"/>
        <dbReference type="ChEBI" id="CHEBI:74565"/>
        <dbReference type="ChEBI" id="CHEBI:77130"/>
    </reaction>
    <physiologicalReaction direction="left-to-right" evidence="1">
        <dbReference type="Rhea" id="RHEA:55309"/>
    </physiologicalReaction>
</comment>
<comment type="catalytic activity">
    <reaction evidence="1">
        <text>(4Z,7Z,10Z,13Z,16Z,19Z)-docosahexaenoyl-CoA + 1-(9Z-octadecenoyl)-sn-glycero-3-phosphate = 1-(9Z-octadecenoyl)-2-(4Z,7Z,10Z,13Z,16Z,19Z-docosahexaenoyl)-sn-glycero-3-phosphate + CoA</text>
        <dbReference type="Rhea" id="RHEA:55312"/>
        <dbReference type="ChEBI" id="CHEBI:57287"/>
        <dbReference type="ChEBI" id="CHEBI:74298"/>
        <dbReference type="ChEBI" id="CHEBI:74544"/>
        <dbReference type="ChEBI" id="CHEBI:138723"/>
    </reaction>
    <physiologicalReaction direction="left-to-right" evidence="1">
        <dbReference type="Rhea" id="RHEA:55313"/>
    </physiologicalReaction>
</comment>
<comment type="pathway">
    <text>Phospholipid metabolism; CDP-diacylglycerol biosynthesis; CDP-diacylglycerol from sn-glycerol 3-phosphate: step 2/3.</text>
</comment>
<comment type="interaction">
    <interactant intactId="EBI-1754287">
        <id>Q9NRZ5</id>
    </interactant>
    <interactant intactId="EBI-17265552">
        <id>A6NM10-2</id>
        <label>AQP12B</label>
    </interactant>
    <organismsDiffer>false</organismsDiffer>
    <experiments>3</experiments>
</comment>
<comment type="interaction">
    <interactant intactId="EBI-1754287">
        <id>Q9NRZ5</id>
    </interactant>
    <interactant intactId="EBI-13059134">
        <id>Q13520</id>
        <label>AQP6</label>
    </interactant>
    <organismsDiffer>false</organismsDiffer>
    <experiments>3</experiments>
</comment>
<comment type="interaction">
    <interactant intactId="EBI-1754287">
        <id>Q9NRZ5</id>
    </interactant>
    <interactant intactId="EBI-2835940">
        <id>P34972</id>
        <label>CNR2</label>
    </interactant>
    <organismsDiffer>false</organismsDiffer>
    <experiments>3</experiments>
</comment>
<comment type="interaction">
    <interactant intactId="EBI-1754287">
        <id>Q9NRZ5</id>
    </interactant>
    <interactant intactId="EBI-6942903">
        <id>Q96BA8</id>
        <label>CREB3L1</label>
    </interactant>
    <organismsDiffer>false</organismsDiffer>
    <experiments>3</experiments>
</comment>
<comment type="interaction">
    <interactant intactId="EBI-1754287">
        <id>Q9NRZ5</id>
    </interactant>
    <interactant intactId="EBI-781551">
        <id>Q9Y282</id>
        <label>ERGIC3</label>
    </interactant>
    <organismsDiffer>false</organismsDiffer>
    <experiments>3</experiments>
</comment>
<comment type="interaction">
    <interactant intactId="EBI-1754287">
        <id>Q9NRZ5</id>
    </interactant>
    <interactant intactId="EBI-17187481">
        <id>P12318-2</id>
        <label>FCGR2A</label>
    </interactant>
    <organismsDiffer>false</organismsDiffer>
    <experiments>3</experiments>
</comment>
<comment type="interaction">
    <interactant intactId="EBI-1754287">
        <id>Q9NRZ5</id>
    </interactant>
    <interactant intactId="EBI-17443171">
        <id>Q96P31-6</id>
        <label>FCRL3</label>
    </interactant>
    <organismsDiffer>false</organismsDiffer>
    <experiments>3</experiments>
</comment>
<comment type="interaction">
    <interactant intactId="EBI-1754287">
        <id>Q9NRZ5</id>
    </interactant>
    <interactant intactId="EBI-2833872">
        <id>O15552</id>
        <label>FFAR2</label>
    </interactant>
    <organismsDiffer>false</organismsDiffer>
    <experiments>3</experiments>
</comment>
<comment type="interaction">
    <interactant intactId="EBI-1754287">
        <id>Q9NRZ5</id>
    </interactant>
    <interactant intactId="EBI-17935713">
        <id>Q96P66</id>
        <label>GPR101</label>
    </interactant>
    <organismsDiffer>false</organismsDiffer>
    <experiments>3</experiments>
</comment>
<comment type="interaction">
    <interactant intactId="EBI-1754287">
        <id>Q9NRZ5</id>
    </interactant>
    <interactant intactId="EBI-1052304">
        <id>Q8NBQ5</id>
        <label>HSD17B11</label>
    </interactant>
    <organismsDiffer>false</organismsDiffer>
    <experiments>3</experiments>
</comment>
<comment type="interaction">
    <interactant intactId="EBI-1754287">
        <id>Q9NRZ5</id>
    </interactant>
    <interactant intactId="EBI-18053395">
        <id>Q7Z5P4</id>
        <label>HSD17B13</label>
    </interactant>
    <organismsDiffer>false</organismsDiffer>
    <experiments>3</experiments>
</comment>
<comment type="interaction">
    <interactant intactId="EBI-1754287">
        <id>Q9NRZ5</id>
    </interactant>
    <interactant intactId="EBI-10266796">
        <id>Q8N5M9</id>
        <label>JAGN1</label>
    </interactant>
    <organismsDiffer>false</organismsDiffer>
    <experiments>3</experiments>
</comment>
<comment type="interaction">
    <interactant intactId="EBI-1754287">
        <id>Q9NRZ5</id>
    </interactant>
    <interactant intactId="EBI-750776">
        <id>O95214</id>
        <label>LEPROTL1</label>
    </interactant>
    <organismsDiffer>false</organismsDiffer>
    <experiments>3</experiments>
</comment>
<comment type="interaction">
    <interactant intactId="EBI-1754287">
        <id>Q9NRZ5</id>
    </interactant>
    <interactant intactId="EBI-17490413">
        <id>A8MZ59</id>
        <label>LEUTX</label>
    </interactant>
    <organismsDiffer>false</organismsDiffer>
    <experiments>3</experiments>
</comment>
<comment type="interaction">
    <interactant intactId="EBI-1754287">
        <id>Q9NRZ5</id>
    </interactant>
    <interactant intactId="EBI-11304917">
        <id>Q8N386</id>
        <label>LRRC25</label>
    </interactant>
    <organismsDiffer>false</organismsDiffer>
    <experiments>3</experiments>
</comment>
<comment type="interaction">
    <interactant intactId="EBI-1754287">
        <id>Q9NRZ5</id>
    </interactant>
    <interactant intactId="EBI-11956541">
        <id>Q9GZY8-5</id>
        <label>MFF</label>
    </interactant>
    <organismsDiffer>false</organismsDiffer>
    <experiments>3</experiments>
</comment>
<comment type="interaction">
    <interactant intactId="EBI-1754287">
        <id>Q9NRZ5</id>
    </interactant>
    <interactant intactId="EBI-373355">
        <id>Q5SR56</id>
        <label>MFSD14B</label>
    </interactant>
    <organismsDiffer>false</organismsDiffer>
    <experiments>3</experiments>
</comment>
<comment type="interaction">
    <interactant intactId="EBI-1754287">
        <id>Q9NRZ5</id>
    </interactant>
    <interactant intactId="EBI-724754">
        <id>O14880</id>
        <label>MGST3</label>
    </interactant>
    <organismsDiffer>false</organismsDiffer>
    <experiments>3</experiments>
</comment>
<comment type="interaction">
    <interactant intactId="EBI-1754287">
        <id>Q9NRZ5</id>
    </interactant>
    <interactant intactId="EBI-7545592">
        <id>Q9H6H4</id>
        <label>REEP4</label>
    </interactant>
    <organismsDiffer>false</organismsDiffer>
    <experiments>3</experiments>
</comment>
<comment type="interaction">
    <interactant intactId="EBI-1754287">
        <id>Q9NRZ5</id>
    </interactant>
    <interactant intactId="EBI-307352">
        <id>Q04864</id>
        <label>REL</label>
    </interactant>
    <organismsDiffer>false</organismsDiffer>
    <experiments>3</experiments>
</comment>
<comment type="interaction">
    <interactant intactId="EBI-1754287">
        <id>Q9NRZ5</id>
    </interactant>
    <interactant intactId="EBI-10192441">
        <id>Q86VR2</id>
        <label>RETREG3</label>
    </interactant>
    <organismsDiffer>false</organismsDiffer>
    <experiments>3</experiments>
</comment>
<comment type="interaction">
    <interactant intactId="EBI-1754287">
        <id>Q9NRZ5</id>
    </interactant>
    <interactant intactId="EBI-17247926">
        <id>Q9NY72</id>
        <label>SCN3B</label>
    </interactant>
    <organismsDiffer>false</organismsDiffer>
    <experiments>3</experiments>
</comment>
<comment type="interaction">
    <interactant intactId="EBI-1754287">
        <id>Q9NRZ5</id>
    </interactant>
    <interactant intactId="EBI-17295964">
        <id>Q9NQQ7-3</id>
        <label>SLC35C2</label>
    </interactant>
    <organismsDiffer>false</organismsDiffer>
    <experiments>3</experiments>
</comment>
<comment type="interaction">
    <interactant intactId="EBI-1754287">
        <id>Q9NRZ5</id>
    </interactant>
    <interactant intactId="EBI-13292283">
        <id>Q9UHI5</id>
        <label>SLC7A8</label>
    </interactant>
    <organismsDiffer>false</organismsDiffer>
    <experiments>3</experiments>
</comment>
<comment type="interaction">
    <interactant intactId="EBI-1754287">
        <id>Q9NRZ5</id>
    </interactant>
    <interactant intactId="EBI-17498703">
        <id>Q9HBV2</id>
        <label>SPACA1</label>
    </interactant>
    <organismsDiffer>false</organismsDiffer>
    <experiments>3</experiments>
</comment>
<comment type="interaction">
    <interactant intactId="EBI-1754287">
        <id>Q9NRZ5</id>
    </interactant>
    <interactant intactId="EBI-8638294">
        <id>Q9NUH8</id>
        <label>TMEM14B</label>
    </interactant>
    <organismsDiffer>false</organismsDiffer>
    <experiments>3</experiments>
</comment>
<comment type="interaction">
    <interactant intactId="EBI-1754287">
        <id>Q9NRZ5</id>
    </interactant>
    <interactant intactId="EBI-6447886">
        <id>Q9Y320</id>
        <label>TMX2</label>
    </interactant>
    <organismsDiffer>false</organismsDiffer>
    <experiments>3</experiments>
</comment>
<comment type="subcellular location">
    <subcellularLocation>
        <location evidence="1">Endoplasmic reticulum membrane</location>
        <topology evidence="3">Multi-pass membrane protein</topology>
    </subcellularLocation>
</comment>
<comment type="alternative products">
    <event type="alternative splicing"/>
    <isoform>
        <id>Q9NRZ5-1</id>
        <name>1</name>
        <sequence type="displayed"/>
    </isoform>
    <isoform>
        <id>Q9NRZ5-2</id>
        <name>2</name>
        <sequence type="described" ref="VSP_056928 VSP_056929"/>
    </isoform>
</comment>
<comment type="tissue specificity">
    <text evidence="4">Widely expressed with highest levels in skeletal muscle, followed by heart, liver, prostate and thymus.</text>
</comment>
<comment type="domain">
    <text evidence="2">The HXXXXD motif is essential for acyltransferase activity and may constitute the binding site for the phosphate moiety of the glycerol-3-phosphate.</text>
</comment>
<comment type="similarity">
    <text evidence="6">Belongs to the 1-acyl-sn-glycerol-3-phosphate acyltransferase family.</text>
</comment>